<feature type="signal peptide" evidence="3">
    <location>
        <begin position="1"/>
        <end position="24"/>
    </location>
</feature>
<feature type="chain" id="PRO_0000011816" description="Probable xyloglucan endotransglucosylase/hydrolase protein 16">
    <location>
        <begin position="25"/>
        <end position="291"/>
    </location>
</feature>
<feature type="domain" description="GH16" evidence="4">
    <location>
        <begin position="25"/>
        <end position="215"/>
    </location>
</feature>
<feature type="active site" description="Nucleophile" evidence="5">
    <location>
        <position position="101"/>
    </location>
</feature>
<feature type="active site" description="Proton donor" evidence="5">
    <location>
        <position position="105"/>
    </location>
</feature>
<feature type="binding site" evidence="2">
    <location>
        <position position="105"/>
    </location>
    <ligand>
        <name>xyloglucan</name>
        <dbReference type="ChEBI" id="CHEBI:18233"/>
    </ligand>
</feature>
<feature type="binding site" evidence="2">
    <location>
        <begin position="118"/>
        <end position="120"/>
    </location>
    <ligand>
        <name>xyloglucan</name>
        <dbReference type="ChEBI" id="CHEBI:18233"/>
    </ligand>
</feature>
<feature type="binding site" evidence="2">
    <location>
        <begin position="128"/>
        <end position="130"/>
    </location>
    <ligand>
        <name>xyloglucan</name>
        <dbReference type="ChEBI" id="CHEBI:18233"/>
    </ligand>
</feature>
<feature type="binding site" evidence="2">
    <location>
        <begin position="194"/>
        <end position="195"/>
    </location>
    <ligand>
        <name>xyloglucan</name>
        <dbReference type="ChEBI" id="CHEBI:18233"/>
    </ligand>
</feature>
<feature type="binding site" evidence="2">
    <location>
        <position position="199"/>
    </location>
    <ligand>
        <name>xyloglucan</name>
        <dbReference type="ChEBI" id="CHEBI:18233"/>
    </ligand>
</feature>
<feature type="binding site" evidence="2">
    <location>
        <position position="277"/>
    </location>
    <ligand>
        <name>xyloglucan</name>
        <dbReference type="ChEBI" id="CHEBI:18233"/>
    </ligand>
</feature>
<feature type="site" description="Important for catalytic activity" evidence="2">
    <location>
        <position position="103"/>
    </location>
</feature>
<feature type="glycosylation site" description="N-linked (GlcNAc...) asparagine" evidence="3">
    <location>
        <position position="109"/>
    </location>
</feature>
<feature type="disulfide bond" evidence="2">
    <location>
        <begin position="223"/>
        <end position="232"/>
    </location>
</feature>
<feature type="disulfide bond" evidence="2">
    <location>
        <begin position="272"/>
        <end position="286"/>
    </location>
</feature>
<feature type="sequence conflict" description="In Ref. 3; AAM61021." evidence="6" ref="3">
    <original>R</original>
    <variation>I</variation>
    <location>
        <position position="256"/>
    </location>
</feature>
<organism>
    <name type="scientific">Arabidopsis thaliana</name>
    <name type="common">Mouse-ear cress</name>
    <dbReference type="NCBI Taxonomy" id="3702"/>
    <lineage>
        <taxon>Eukaryota</taxon>
        <taxon>Viridiplantae</taxon>
        <taxon>Streptophyta</taxon>
        <taxon>Embryophyta</taxon>
        <taxon>Tracheophyta</taxon>
        <taxon>Spermatophyta</taxon>
        <taxon>Magnoliopsida</taxon>
        <taxon>eudicotyledons</taxon>
        <taxon>Gunneridae</taxon>
        <taxon>Pentapetalae</taxon>
        <taxon>rosids</taxon>
        <taxon>malvids</taxon>
        <taxon>Brassicales</taxon>
        <taxon>Brassicaceae</taxon>
        <taxon>Camelineae</taxon>
        <taxon>Arabidopsis</taxon>
    </lineage>
</organism>
<keyword id="KW-0052">Apoplast</keyword>
<keyword id="KW-0134">Cell wall</keyword>
<keyword id="KW-0961">Cell wall biogenesis/degradation</keyword>
<keyword id="KW-1015">Disulfide bond</keyword>
<keyword id="KW-0325">Glycoprotein</keyword>
<keyword id="KW-0326">Glycosidase</keyword>
<keyword id="KW-0378">Hydrolase</keyword>
<keyword id="KW-1185">Reference proteome</keyword>
<keyword id="KW-0964">Secreted</keyword>
<keyword id="KW-0732">Signal</keyword>
<keyword id="KW-0808">Transferase</keyword>
<evidence type="ECO:0000250" key="1"/>
<evidence type="ECO:0000250" key="2">
    <source>
        <dbReference type="UniProtKB" id="Q8GZD5"/>
    </source>
</evidence>
<evidence type="ECO:0000255" key="3"/>
<evidence type="ECO:0000255" key="4">
    <source>
        <dbReference type="PROSITE-ProRule" id="PRU01098"/>
    </source>
</evidence>
<evidence type="ECO:0000255" key="5">
    <source>
        <dbReference type="PROSITE-ProRule" id="PRU10064"/>
    </source>
</evidence>
<evidence type="ECO:0000305" key="6"/>
<dbReference type="EC" id="2.4.1.207"/>
<dbReference type="EMBL" id="AP000377">
    <property type="protein sequence ID" value="BAB01849.1"/>
    <property type="molecule type" value="Genomic_DNA"/>
</dbReference>
<dbReference type="EMBL" id="CP002686">
    <property type="protein sequence ID" value="AEE76807.1"/>
    <property type="molecule type" value="Genomic_DNA"/>
</dbReference>
<dbReference type="EMBL" id="AY084449">
    <property type="protein sequence ID" value="AAM61021.1"/>
    <property type="molecule type" value="mRNA"/>
</dbReference>
<dbReference type="RefSeq" id="NP_566738.1">
    <property type="nucleotide sequence ID" value="NM_113277.3"/>
</dbReference>
<dbReference type="SMR" id="Q8LG58"/>
<dbReference type="FunCoup" id="Q8LG58">
    <property type="interactions" value="60"/>
</dbReference>
<dbReference type="STRING" id="3702.Q8LG58"/>
<dbReference type="CAZy" id="GH16">
    <property type="family name" value="Glycoside Hydrolase Family 16"/>
</dbReference>
<dbReference type="GlyCosmos" id="Q8LG58">
    <property type="glycosylation" value="1 site, No reported glycans"/>
</dbReference>
<dbReference type="GlyGen" id="Q8LG58">
    <property type="glycosylation" value="1 site"/>
</dbReference>
<dbReference type="iPTMnet" id="Q8LG58"/>
<dbReference type="PaxDb" id="3702-AT3G23730.1"/>
<dbReference type="ProteomicsDB" id="242429"/>
<dbReference type="EnsemblPlants" id="AT3G23730.1">
    <property type="protein sequence ID" value="AT3G23730.1"/>
    <property type="gene ID" value="AT3G23730"/>
</dbReference>
<dbReference type="GeneID" id="821955"/>
<dbReference type="Gramene" id="AT3G23730.1">
    <property type="protein sequence ID" value="AT3G23730.1"/>
    <property type="gene ID" value="AT3G23730"/>
</dbReference>
<dbReference type="KEGG" id="ath:AT3G23730"/>
<dbReference type="Araport" id="AT3G23730"/>
<dbReference type="TAIR" id="AT3G23730">
    <property type="gene designation" value="XTH16"/>
</dbReference>
<dbReference type="eggNOG" id="ENOG502QQ71">
    <property type="taxonomic scope" value="Eukaryota"/>
</dbReference>
<dbReference type="HOGENOM" id="CLU_048041_0_0_1"/>
<dbReference type="InParanoid" id="Q8LG58"/>
<dbReference type="OMA" id="TWGEHRG"/>
<dbReference type="OrthoDB" id="4781at2759"/>
<dbReference type="PhylomeDB" id="Q8LG58"/>
<dbReference type="BioCyc" id="ARA:AT3G23730-MONOMER"/>
<dbReference type="PRO" id="PR:Q8LG58"/>
<dbReference type="Proteomes" id="UP000006548">
    <property type="component" value="Chromosome 3"/>
</dbReference>
<dbReference type="ExpressionAtlas" id="Q8LG58">
    <property type="expression patterns" value="baseline and differential"/>
</dbReference>
<dbReference type="GO" id="GO:0048046">
    <property type="term" value="C:apoplast"/>
    <property type="evidence" value="ECO:0007669"/>
    <property type="project" value="UniProtKB-SubCell"/>
</dbReference>
<dbReference type="GO" id="GO:0004553">
    <property type="term" value="F:hydrolase activity, hydrolyzing O-glycosyl compounds"/>
    <property type="evidence" value="ECO:0007669"/>
    <property type="project" value="InterPro"/>
</dbReference>
<dbReference type="GO" id="GO:0030247">
    <property type="term" value="F:polysaccharide binding"/>
    <property type="evidence" value="ECO:0000250"/>
    <property type="project" value="UniProtKB"/>
</dbReference>
<dbReference type="GO" id="GO:0016762">
    <property type="term" value="F:xyloglucan:xyloglucosyl transferase activity"/>
    <property type="evidence" value="ECO:0007669"/>
    <property type="project" value="UniProtKB-EC"/>
</dbReference>
<dbReference type="GO" id="GO:0042546">
    <property type="term" value="P:cell wall biogenesis"/>
    <property type="evidence" value="ECO:0007669"/>
    <property type="project" value="InterPro"/>
</dbReference>
<dbReference type="GO" id="GO:0071555">
    <property type="term" value="P:cell wall organization"/>
    <property type="evidence" value="ECO:0007669"/>
    <property type="project" value="UniProtKB-KW"/>
</dbReference>
<dbReference type="GO" id="GO:0010411">
    <property type="term" value="P:xyloglucan metabolic process"/>
    <property type="evidence" value="ECO:0007669"/>
    <property type="project" value="InterPro"/>
</dbReference>
<dbReference type="CDD" id="cd02176">
    <property type="entry name" value="GH16_XET"/>
    <property type="match status" value="1"/>
</dbReference>
<dbReference type="FunFam" id="2.60.120.200:FF:000025">
    <property type="entry name" value="Xyloglucan endotransglucosylase/hydrolase"/>
    <property type="match status" value="1"/>
</dbReference>
<dbReference type="Gene3D" id="2.60.120.200">
    <property type="match status" value="1"/>
</dbReference>
<dbReference type="InterPro" id="IPR044791">
    <property type="entry name" value="Beta-glucanase/XTH"/>
</dbReference>
<dbReference type="InterPro" id="IPR013320">
    <property type="entry name" value="ConA-like_dom_sf"/>
</dbReference>
<dbReference type="InterPro" id="IPR000757">
    <property type="entry name" value="GH16"/>
</dbReference>
<dbReference type="InterPro" id="IPR008263">
    <property type="entry name" value="GH16_AS"/>
</dbReference>
<dbReference type="InterPro" id="IPR010713">
    <property type="entry name" value="XET_C"/>
</dbReference>
<dbReference type="InterPro" id="IPR016455">
    <property type="entry name" value="XTH"/>
</dbReference>
<dbReference type="PANTHER" id="PTHR31062">
    <property type="entry name" value="XYLOGLUCAN ENDOTRANSGLUCOSYLASE/HYDROLASE PROTEIN 8-RELATED"/>
    <property type="match status" value="1"/>
</dbReference>
<dbReference type="Pfam" id="PF00722">
    <property type="entry name" value="Glyco_hydro_16"/>
    <property type="match status" value="1"/>
</dbReference>
<dbReference type="Pfam" id="PF06955">
    <property type="entry name" value="XET_C"/>
    <property type="match status" value="1"/>
</dbReference>
<dbReference type="PIRSF" id="PIRSF005604">
    <property type="entry name" value="XET"/>
    <property type="match status" value="1"/>
</dbReference>
<dbReference type="SUPFAM" id="SSF49899">
    <property type="entry name" value="Concanavalin A-like lectins/glucanases"/>
    <property type="match status" value="1"/>
</dbReference>
<dbReference type="PROSITE" id="PS01034">
    <property type="entry name" value="GH16_1"/>
    <property type="match status" value="1"/>
</dbReference>
<dbReference type="PROSITE" id="PS51762">
    <property type="entry name" value="GH16_2"/>
    <property type="match status" value="1"/>
</dbReference>
<protein>
    <recommendedName>
        <fullName>Probable xyloglucan endotransglucosylase/hydrolase protein 16</fullName>
        <shortName>At-XTH16</shortName>
        <shortName>XTH-16</shortName>
        <ecNumber>2.4.1.207</ecNumber>
    </recommendedName>
</protein>
<name>XTH16_ARATH</name>
<gene>
    <name type="primary">XTH16</name>
    <name type="ordered locus">At3g23730</name>
    <name type="ORF">MYM9.11</name>
</gene>
<comment type="function">
    <text evidence="1">Catalyzes xyloglucan endohydrolysis (XEH) and/or endotransglycosylation (XET). Cleaves and religates xyloglucan polymers, an essential constituent of the primary cell wall, and thereby participates in cell wall construction of growing tissues (By similarity).</text>
</comment>
<comment type="catalytic activity">
    <reaction>
        <text>breaks a beta-(1-&gt;4) bond in the backbone of a xyloglucan and transfers the xyloglucanyl segment on to O-4 of the non-reducing terminal glucose residue of an acceptor, which can be a xyloglucan or an oligosaccharide of xyloglucan.</text>
        <dbReference type="EC" id="2.4.1.207"/>
    </reaction>
</comment>
<comment type="subcellular location">
    <subcellularLocation>
        <location evidence="6">Secreted</location>
        <location evidence="6">Cell wall</location>
    </subcellularLocation>
    <subcellularLocation>
        <location evidence="6">Secreted</location>
        <location evidence="6">Extracellular space</location>
        <location evidence="6">Apoplast</location>
    </subcellularLocation>
</comment>
<comment type="PTM">
    <text evidence="1">Contains at least one intrachain disulfide bond essential for its enzymatic activity.</text>
</comment>
<comment type="similarity">
    <text evidence="6">Belongs to the glycosyl hydrolase 16 family. XTH group 2 subfamily.</text>
</comment>
<reference key="1">
    <citation type="journal article" date="2000" name="DNA Res.">
        <title>Structural analysis of Arabidopsis thaliana chromosome 3. II. Sequence features of the 4,251,695 bp regions covered by 90 P1, TAC and BAC clones.</title>
        <authorList>
            <person name="Kaneko T."/>
            <person name="Katoh T."/>
            <person name="Sato S."/>
            <person name="Nakamura Y."/>
            <person name="Asamizu E."/>
            <person name="Tabata S."/>
        </authorList>
    </citation>
    <scope>NUCLEOTIDE SEQUENCE [LARGE SCALE GENOMIC DNA]</scope>
    <source>
        <strain>cv. Columbia</strain>
    </source>
</reference>
<reference key="2">
    <citation type="journal article" date="2017" name="Plant J.">
        <title>Araport11: a complete reannotation of the Arabidopsis thaliana reference genome.</title>
        <authorList>
            <person name="Cheng C.Y."/>
            <person name="Krishnakumar V."/>
            <person name="Chan A.P."/>
            <person name="Thibaud-Nissen F."/>
            <person name="Schobel S."/>
            <person name="Town C.D."/>
        </authorList>
    </citation>
    <scope>GENOME REANNOTATION</scope>
    <source>
        <strain>cv. Columbia</strain>
    </source>
</reference>
<reference key="3">
    <citation type="submission" date="2002-03" db="EMBL/GenBank/DDBJ databases">
        <title>Full-length cDNA from Arabidopsis thaliana.</title>
        <authorList>
            <person name="Brover V.V."/>
            <person name="Troukhan M.E."/>
            <person name="Alexandrov N.A."/>
            <person name="Lu Y.-P."/>
            <person name="Flavell R.B."/>
            <person name="Feldmann K.A."/>
        </authorList>
    </citation>
    <scope>NUCLEOTIDE SEQUENCE [LARGE SCALE MRNA]</scope>
</reference>
<reference key="4">
    <citation type="journal article" date="2002" name="Plant Cell Physiol.">
        <title>The XTH family of enzymes involved in xyloglucan endotransglucosylation and endohydrolysis: current perspectives and a new unifying nomenclature.</title>
        <authorList>
            <person name="Rose J.K.C."/>
            <person name="Braam J."/>
            <person name="Fry S.C."/>
            <person name="Nishitani K."/>
        </authorList>
    </citation>
    <scope>NOMENCLATURE</scope>
</reference>
<accession>Q8LG58</accession>
<accession>Q9LK45</accession>
<sequence length="291" mass="33147">MGRILNRTVLMTLLVVTMAGTAFSGSFNEEFDLTWGEHRGKIFSGGKMLSLSLDRVSGSGFKSKKEYLFGRIDMQLKLVAGNSAGTVTAYYLSSEGPTHDEIDFEFLGNETGKPYVLHTNVFAQGKGNREQQFYLWFDPTKNFHTYSLVWRPQHIIFMVDNVPIRVFNNAEQLGVPFPKNQPMKIYSSLWNADDWATRGGLVKTDWSKAPFTAYYRGFNAAACTVSSGSSFCDPKFKSSFTNGESQVANELNAYGRRRLRWVQKYFMIYDYCSDLKRFPQGFPPECRKSRV</sequence>
<proteinExistence type="evidence at transcript level"/>